<name>TBP_THEVO</name>
<accession>Q978J5</accession>
<gene>
    <name evidence="1" type="primary">tbp</name>
    <name type="ordered locus">TV1420</name>
    <name type="ORF">TVG1467237</name>
</gene>
<protein>
    <recommendedName>
        <fullName evidence="1">TATA-box-binding protein</fullName>
    </recommendedName>
    <alternativeName>
        <fullName evidence="1">Box A-binding protein</fullName>
        <shortName evidence="1">BAP</shortName>
    </alternativeName>
    <alternativeName>
        <fullName evidence="1">TATA sequence-binding protein</fullName>
        <shortName evidence="1">TBP</shortName>
    </alternativeName>
    <alternativeName>
        <fullName evidence="1">TATA-box factor</fullName>
    </alternativeName>
</protein>
<dbReference type="EMBL" id="BA000011">
    <property type="protein sequence ID" value="BAB60562.1"/>
    <property type="molecule type" value="Genomic_DNA"/>
</dbReference>
<dbReference type="RefSeq" id="WP_010917652.1">
    <property type="nucleotide sequence ID" value="NC_002689.2"/>
</dbReference>
<dbReference type="SMR" id="Q978J5"/>
<dbReference type="STRING" id="273116.gene:9382229"/>
<dbReference type="PaxDb" id="273116-14325659"/>
<dbReference type="GeneID" id="1442110"/>
<dbReference type="KEGG" id="tvo:TVG1467237"/>
<dbReference type="eggNOG" id="arCOG01764">
    <property type="taxonomic scope" value="Archaea"/>
</dbReference>
<dbReference type="HOGENOM" id="CLU_060161_4_3_2"/>
<dbReference type="OrthoDB" id="350539at2157"/>
<dbReference type="PhylomeDB" id="Q978J5"/>
<dbReference type="Proteomes" id="UP000001017">
    <property type="component" value="Chromosome"/>
</dbReference>
<dbReference type="GO" id="GO:0003677">
    <property type="term" value="F:DNA binding"/>
    <property type="evidence" value="ECO:0007669"/>
    <property type="project" value="UniProtKB-KW"/>
</dbReference>
<dbReference type="GO" id="GO:0003700">
    <property type="term" value="F:DNA-binding transcription factor activity"/>
    <property type="evidence" value="ECO:0007669"/>
    <property type="project" value="UniProtKB-UniRule"/>
</dbReference>
<dbReference type="GO" id="GO:0006352">
    <property type="term" value="P:DNA-templated transcription initiation"/>
    <property type="evidence" value="ECO:0007669"/>
    <property type="project" value="InterPro"/>
</dbReference>
<dbReference type="CDD" id="cd04518">
    <property type="entry name" value="TBP_archaea"/>
    <property type="match status" value="1"/>
</dbReference>
<dbReference type="FunFam" id="3.30.310.10:FF:000007">
    <property type="entry name" value="TATA-box-binding protein"/>
    <property type="match status" value="1"/>
</dbReference>
<dbReference type="FunFam" id="3.30.310.10:FF:000010">
    <property type="entry name" value="TATA-box-binding protein"/>
    <property type="match status" value="1"/>
</dbReference>
<dbReference type="Gene3D" id="3.30.310.10">
    <property type="entry name" value="TATA-Binding Protein"/>
    <property type="match status" value="2"/>
</dbReference>
<dbReference type="HAMAP" id="MF_00408">
    <property type="entry name" value="TATA_bind_prot_arch"/>
    <property type="match status" value="1"/>
</dbReference>
<dbReference type="InterPro" id="IPR000814">
    <property type="entry name" value="TBP"/>
</dbReference>
<dbReference type="InterPro" id="IPR033711">
    <property type="entry name" value="TBP_archaea"/>
</dbReference>
<dbReference type="InterPro" id="IPR030491">
    <property type="entry name" value="TBP_CS"/>
</dbReference>
<dbReference type="InterPro" id="IPR012295">
    <property type="entry name" value="TBP_dom_sf"/>
</dbReference>
<dbReference type="NCBIfam" id="NF001593">
    <property type="entry name" value="PRK00394.1-2"/>
    <property type="match status" value="1"/>
</dbReference>
<dbReference type="NCBIfam" id="NF001597">
    <property type="entry name" value="PRK00394.2-2"/>
    <property type="match status" value="1"/>
</dbReference>
<dbReference type="NCBIfam" id="NF001598">
    <property type="entry name" value="PRK00394.2-3"/>
    <property type="match status" value="1"/>
</dbReference>
<dbReference type="PANTHER" id="PTHR10126">
    <property type="entry name" value="TATA-BOX BINDING PROTEIN"/>
    <property type="match status" value="1"/>
</dbReference>
<dbReference type="Pfam" id="PF00352">
    <property type="entry name" value="TBP"/>
    <property type="match status" value="2"/>
</dbReference>
<dbReference type="PRINTS" id="PR00686">
    <property type="entry name" value="TIFACTORIID"/>
</dbReference>
<dbReference type="SUPFAM" id="SSF55945">
    <property type="entry name" value="TATA-box binding protein-like"/>
    <property type="match status" value="2"/>
</dbReference>
<dbReference type="PROSITE" id="PS00351">
    <property type="entry name" value="TFIID"/>
    <property type="match status" value="1"/>
</dbReference>
<feature type="chain" id="PRO_0000154030" description="TATA-box-binding protein">
    <location>
        <begin position="1"/>
        <end position="184"/>
    </location>
</feature>
<feature type="repeat" description="1">
    <location>
        <begin position="9"/>
        <end position="85"/>
    </location>
</feature>
<feature type="repeat" description="2">
    <location>
        <begin position="100"/>
        <end position="178"/>
    </location>
</feature>
<sequence>MSEREKITIENIVASTSLAEHLDLSRIALALDGSEYEPEQFPGLIYRLQDPKTAVLIFRSGKVNCTGAKNIEDVKRTIKIIIDKLKAANIEVYDDPDIIVQNIVAVYDLESELNLTDIAMSLGLENVEYEPEQFPGLVYRVEEPRVVLLLFGSGKVVCTGAKEESEIEQAVIKVKKELQKVGLI</sequence>
<evidence type="ECO:0000255" key="1">
    <source>
        <dbReference type="HAMAP-Rule" id="MF_00408"/>
    </source>
</evidence>
<reference key="1">
    <citation type="journal article" date="2000" name="Proc. Natl. Acad. Sci. U.S.A.">
        <title>Archaeal adaptation to higher temperatures revealed by genomic sequence of Thermoplasma volcanium.</title>
        <authorList>
            <person name="Kawashima T."/>
            <person name="Amano N."/>
            <person name="Koike H."/>
            <person name="Makino S."/>
            <person name="Higuchi S."/>
            <person name="Kawashima-Ohya Y."/>
            <person name="Watanabe K."/>
            <person name="Yamazaki M."/>
            <person name="Kanehori K."/>
            <person name="Kawamoto T."/>
            <person name="Nunoshiba T."/>
            <person name="Yamamoto Y."/>
            <person name="Aramaki H."/>
            <person name="Makino K."/>
            <person name="Suzuki M."/>
        </authorList>
    </citation>
    <scope>NUCLEOTIDE SEQUENCE [LARGE SCALE GENOMIC DNA]</scope>
    <source>
        <strain>ATCC 51530 / DSM 4299 / JCM 9571 / NBRC 15438 / GSS1</strain>
    </source>
</reference>
<keyword id="KW-0238">DNA-binding</keyword>
<keyword id="KW-0677">Repeat</keyword>
<keyword id="KW-0804">Transcription</keyword>
<keyword id="KW-0805">Transcription regulation</keyword>
<comment type="function">
    <text evidence="1">General factor that plays a role in the activation of archaeal genes transcribed by RNA polymerase. Binds specifically to the TATA box promoter element which lies close to the position of transcription initiation.</text>
</comment>
<comment type="similarity">
    <text evidence="1">Belongs to the TBP family.</text>
</comment>
<organism>
    <name type="scientific">Thermoplasma volcanium (strain ATCC 51530 / DSM 4299 / JCM 9571 / NBRC 15438 / GSS1)</name>
    <dbReference type="NCBI Taxonomy" id="273116"/>
    <lineage>
        <taxon>Archaea</taxon>
        <taxon>Methanobacteriati</taxon>
        <taxon>Thermoplasmatota</taxon>
        <taxon>Thermoplasmata</taxon>
        <taxon>Thermoplasmatales</taxon>
        <taxon>Thermoplasmataceae</taxon>
        <taxon>Thermoplasma</taxon>
    </lineage>
</organism>
<proteinExistence type="inferred from homology"/>